<reference key="1">
    <citation type="journal article" date="2004" name="Proc. Natl. Acad. Sci. U.S.A.">
        <title>Structural flexibility in the Burkholderia mallei genome.</title>
        <authorList>
            <person name="Nierman W.C."/>
            <person name="DeShazer D."/>
            <person name="Kim H.S."/>
            <person name="Tettelin H."/>
            <person name="Nelson K.E."/>
            <person name="Feldblyum T.V."/>
            <person name="Ulrich R.L."/>
            <person name="Ronning C.M."/>
            <person name="Brinkac L.M."/>
            <person name="Daugherty S.C."/>
            <person name="Davidsen T.D."/>
            <person name="DeBoy R.T."/>
            <person name="Dimitrov G."/>
            <person name="Dodson R.J."/>
            <person name="Durkin A.S."/>
            <person name="Gwinn M.L."/>
            <person name="Haft D.H."/>
            <person name="Khouri H.M."/>
            <person name="Kolonay J.F."/>
            <person name="Madupu R."/>
            <person name="Mohammoud Y."/>
            <person name="Nelson W.C."/>
            <person name="Radune D."/>
            <person name="Romero C.M."/>
            <person name="Sarria S."/>
            <person name="Selengut J."/>
            <person name="Shamblin C."/>
            <person name="Sullivan S.A."/>
            <person name="White O."/>
            <person name="Yu Y."/>
            <person name="Zafar N."/>
            <person name="Zhou L."/>
            <person name="Fraser C.M."/>
        </authorList>
    </citation>
    <scope>NUCLEOTIDE SEQUENCE [LARGE SCALE GENOMIC DNA]</scope>
    <source>
        <strain>ATCC 23344</strain>
    </source>
</reference>
<evidence type="ECO:0000255" key="1">
    <source>
        <dbReference type="HAMAP-Rule" id="MF_01724"/>
    </source>
</evidence>
<evidence type="ECO:0000256" key="2">
    <source>
        <dbReference type="SAM" id="MobiDB-lite"/>
    </source>
</evidence>
<evidence type="ECO:0000305" key="3"/>
<protein>
    <recommendedName>
        <fullName evidence="1">Aliphatic sulfonates import ATP-binding protein SsuB</fullName>
        <ecNumber evidence="1">7.6.2.14</ecNumber>
    </recommendedName>
</protein>
<comment type="function">
    <text evidence="1">Part of the ABC transporter complex SsuABC involved in aliphatic sulfonates import. Responsible for energy coupling to the transport system.</text>
</comment>
<comment type="catalytic activity">
    <reaction evidence="1">
        <text>ATP + H2O + aliphatic sulfonate-[sulfonate-binding protein]Side 1 = ADP + phosphate + aliphatic sulfonateSide 2 + [sulfonate-binding protein]Side 1.</text>
        <dbReference type="EC" id="7.6.2.14"/>
    </reaction>
</comment>
<comment type="subunit">
    <text evidence="1">The complex is composed of two ATP-binding proteins (SsuB), two transmembrane proteins (SsuC) and a solute-binding protein (SsuA).</text>
</comment>
<comment type="subcellular location">
    <subcellularLocation>
        <location evidence="1">Cell inner membrane</location>
        <topology evidence="1">Peripheral membrane protein</topology>
    </subcellularLocation>
</comment>
<comment type="similarity">
    <text evidence="1">Belongs to the ABC transporter superfamily. Aliphatic sulfonates importer (TC 3.A.1.17.2) family.</text>
</comment>
<comment type="sequence caution" evidence="3">
    <conflict type="erroneous initiation">
        <sequence resource="EMBL-CDS" id="AAU47515"/>
    </conflict>
</comment>
<sequence>MTGTTLAATYGPISGADLEAELAQPRIADGDAQDAAVYERDGGARALPFASGGAPPDGDRADVRRAAGAGDASVRLTRVSKRYGERAVLADVDLSIGRGSFVSIVGRSGCGKSTLLRLVAELETPSAGTLVKRGDGGGALDTRIMYQEARLLPWKTVLQNVMLGLGRRAKDDARAVLDEVGLLARANDWPAQLSGGQRQRVALARALVHRPQLLLLDEPLGALDALTRIEMHALIERLWREHRFTALLVTHDVQEAVALADRVLLIEAGRIAFDQRVPLDRPRARASAAFAALEDRVLQRVLTGSDAAPAAPNAAGPEGASRGRAAPASGLRWAV</sequence>
<name>SSUB_BURMA</name>
<proteinExistence type="inferred from homology"/>
<accession>Q62K56</accession>
<organism>
    <name type="scientific">Burkholderia mallei (strain ATCC 23344)</name>
    <dbReference type="NCBI Taxonomy" id="243160"/>
    <lineage>
        <taxon>Bacteria</taxon>
        <taxon>Pseudomonadati</taxon>
        <taxon>Pseudomonadota</taxon>
        <taxon>Betaproteobacteria</taxon>
        <taxon>Burkholderiales</taxon>
        <taxon>Burkholderiaceae</taxon>
        <taxon>Burkholderia</taxon>
        <taxon>pseudomallei group</taxon>
    </lineage>
</organism>
<keyword id="KW-0067">ATP-binding</keyword>
<keyword id="KW-0997">Cell inner membrane</keyword>
<keyword id="KW-1003">Cell membrane</keyword>
<keyword id="KW-0472">Membrane</keyword>
<keyword id="KW-0547">Nucleotide-binding</keyword>
<keyword id="KW-1185">Reference proteome</keyword>
<keyword id="KW-1278">Translocase</keyword>
<keyword id="KW-0813">Transport</keyword>
<dbReference type="EC" id="7.6.2.14" evidence="1"/>
<dbReference type="EMBL" id="CP000010">
    <property type="protein sequence ID" value="AAU47515.1"/>
    <property type="status" value="ALT_INIT"/>
    <property type="molecule type" value="Genomic_DNA"/>
</dbReference>
<dbReference type="RefSeq" id="WP_004193270.1">
    <property type="nucleotide sequence ID" value="NC_006348.1"/>
</dbReference>
<dbReference type="RefSeq" id="YP_102913.1">
    <property type="nucleotide sequence ID" value="NC_006348.1"/>
</dbReference>
<dbReference type="SMR" id="Q62K56"/>
<dbReference type="KEGG" id="bma:BMA1237"/>
<dbReference type="PATRIC" id="fig|243160.12.peg.1272"/>
<dbReference type="eggNOG" id="COG1116">
    <property type="taxonomic scope" value="Bacteria"/>
</dbReference>
<dbReference type="HOGENOM" id="CLU_000604_1_22_4"/>
<dbReference type="Proteomes" id="UP000006693">
    <property type="component" value="Chromosome 1"/>
</dbReference>
<dbReference type="GO" id="GO:0005886">
    <property type="term" value="C:plasma membrane"/>
    <property type="evidence" value="ECO:0007669"/>
    <property type="project" value="UniProtKB-SubCell"/>
</dbReference>
<dbReference type="GO" id="GO:0005524">
    <property type="term" value="F:ATP binding"/>
    <property type="evidence" value="ECO:0007669"/>
    <property type="project" value="UniProtKB-KW"/>
</dbReference>
<dbReference type="GO" id="GO:0016887">
    <property type="term" value="F:ATP hydrolysis activity"/>
    <property type="evidence" value="ECO:0007669"/>
    <property type="project" value="InterPro"/>
</dbReference>
<dbReference type="Gene3D" id="3.40.50.300">
    <property type="entry name" value="P-loop containing nucleotide triphosphate hydrolases"/>
    <property type="match status" value="1"/>
</dbReference>
<dbReference type="InterPro" id="IPR003593">
    <property type="entry name" value="AAA+_ATPase"/>
</dbReference>
<dbReference type="InterPro" id="IPR003439">
    <property type="entry name" value="ABC_transporter-like_ATP-bd"/>
</dbReference>
<dbReference type="InterPro" id="IPR017871">
    <property type="entry name" value="ABC_transporter-like_CS"/>
</dbReference>
<dbReference type="InterPro" id="IPR050166">
    <property type="entry name" value="ABC_transporter_ATP-bind"/>
</dbReference>
<dbReference type="InterPro" id="IPR027417">
    <property type="entry name" value="P-loop_NTPase"/>
</dbReference>
<dbReference type="PANTHER" id="PTHR42788:SF17">
    <property type="entry name" value="ALIPHATIC SULFONATES IMPORT ATP-BINDING PROTEIN SSUB"/>
    <property type="match status" value="1"/>
</dbReference>
<dbReference type="PANTHER" id="PTHR42788">
    <property type="entry name" value="TAURINE IMPORT ATP-BINDING PROTEIN-RELATED"/>
    <property type="match status" value="1"/>
</dbReference>
<dbReference type="Pfam" id="PF00005">
    <property type="entry name" value="ABC_tran"/>
    <property type="match status" value="1"/>
</dbReference>
<dbReference type="SMART" id="SM00382">
    <property type="entry name" value="AAA"/>
    <property type="match status" value="1"/>
</dbReference>
<dbReference type="SUPFAM" id="SSF52540">
    <property type="entry name" value="P-loop containing nucleoside triphosphate hydrolases"/>
    <property type="match status" value="1"/>
</dbReference>
<dbReference type="PROSITE" id="PS00211">
    <property type="entry name" value="ABC_TRANSPORTER_1"/>
    <property type="match status" value="1"/>
</dbReference>
<dbReference type="PROSITE" id="PS50893">
    <property type="entry name" value="ABC_TRANSPORTER_2"/>
    <property type="match status" value="1"/>
</dbReference>
<dbReference type="PROSITE" id="PS51291">
    <property type="entry name" value="SSUB"/>
    <property type="match status" value="1"/>
</dbReference>
<gene>
    <name evidence="1" type="primary">ssuB</name>
    <name type="ordered locus">BMA1237</name>
</gene>
<feature type="chain" id="PRO_0000279900" description="Aliphatic sulfonates import ATP-binding protein SsuB">
    <location>
        <begin position="1"/>
        <end position="335"/>
    </location>
</feature>
<feature type="domain" description="ABC transporter" evidence="1">
    <location>
        <begin position="74"/>
        <end position="293"/>
    </location>
</feature>
<feature type="region of interest" description="Disordered" evidence="2">
    <location>
        <begin position="308"/>
        <end position="335"/>
    </location>
</feature>
<feature type="binding site" evidence="1">
    <location>
        <begin position="106"/>
        <end position="113"/>
    </location>
    <ligand>
        <name>ATP</name>
        <dbReference type="ChEBI" id="CHEBI:30616"/>
    </ligand>
</feature>